<comment type="function">
    <text evidence="1">NDH-1 shuttles electrons from NADH, via FMN and iron-sulfur (Fe-S) centers, to quinones in the respiratory chain. The immediate electron acceptor for the enzyme in this species is believed to be ubiquinone. Couples the redox reaction to proton translocation (for every two electrons transferred, four hydrogen ions are translocated across the cytoplasmic membrane), and thus conserves the redox energy in a proton gradient.</text>
</comment>
<comment type="catalytic activity">
    <reaction evidence="1">
        <text>a quinone + NADH + 5 H(+)(in) = a quinol + NAD(+) + 4 H(+)(out)</text>
        <dbReference type="Rhea" id="RHEA:57888"/>
        <dbReference type="ChEBI" id="CHEBI:15378"/>
        <dbReference type="ChEBI" id="CHEBI:24646"/>
        <dbReference type="ChEBI" id="CHEBI:57540"/>
        <dbReference type="ChEBI" id="CHEBI:57945"/>
        <dbReference type="ChEBI" id="CHEBI:132124"/>
    </reaction>
</comment>
<comment type="subunit">
    <text evidence="1">NDH-1 is composed of 14 different subunits. Subunits NuoA, H, J, K, L, M, N constitute the membrane sector of the complex.</text>
</comment>
<comment type="subcellular location">
    <subcellularLocation>
        <location evidence="1">Cell inner membrane</location>
        <topology evidence="1">Multi-pass membrane protein</topology>
    </subcellularLocation>
</comment>
<comment type="similarity">
    <text evidence="1">Belongs to the complex I subunit 2 family.</text>
</comment>
<protein>
    <recommendedName>
        <fullName evidence="1">NADH-quinone oxidoreductase subunit N 2</fullName>
        <ecNumber evidence="1">7.1.1.-</ecNumber>
    </recommendedName>
    <alternativeName>
        <fullName evidence="1">NADH dehydrogenase I subunit N 2</fullName>
    </alternativeName>
    <alternativeName>
        <fullName evidence="1">NDH-1 subunit N 2</fullName>
    </alternativeName>
</protein>
<gene>
    <name evidence="1" type="primary">nuoN2</name>
    <name type="ordered locus">DMR_27820</name>
</gene>
<feature type="chain" id="PRO_0000391141" description="NADH-quinone oxidoreductase subunit N 2">
    <location>
        <begin position="1"/>
        <end position="467"/>
    </location>
</feature>
<feature type="transmembrane region" description="Helical" evidence="1">
    <location>
        <begin position="1"/>
        <end position="21"/>
    </location>
</feature>
<feature type="transmembrane region" description="Helical" evidence="1">
    <location>
        <begin position="31"/>
        <end position="51"/>
    </location>
</feature>
<feature type="transmembrane region" description="Helical" evidence="1">
    <location>
        <begin position="66"/>
        <end position="86"/>
    </location>
</feature>
<feature type="transmembrane region" description="Helical" evidence="1">
    <location>
        <begin position="99"/>
        <end position="119"/>
    </location>
</feature>
<feature type="transmembrane region" description="Helical" evidence="1">
    <location>
        <begin position="153"/>
        <end position="173"/>
    </location>
</feature>
<feature type="transmembrane region" description="Helical" evidence="1">
    <location>
        <begin position="195"/>
        <end position="215"/>
    </location>
</feature>
<feature type="transmembrane region" description="Helical" evidence="1">
    <location>
        <begin position="231"/>
        <end position="253"/>
    </location>
</feature>
<feature type="transmembrane region" description="Helical" evidence="1">
    <location>
        <begin position="258"/>
        <end position="280"/>
    </location>
</feature>
<feature type="transmembrane region" description="Helical" evidence="1">
    <location>
        <begin position="287"/>
        <end position="307"/>
    </location>
</feature>
<feature type="transmembrane region" description="Helical" evidence="1">
    <location>
        <begin position="315"/>
        <end position="335"/>
    </location>
</feature>
<feature type="transmembrane region" description="Helical" evidence="1">
    <location>
        <begin position="357"/>
        <end position="377"/>
    </location>
</feature>
<feature type="transmembrane region" description="Helical" evidence="1">
    <location>
        <begin position="394"/>
        <end position="414"/>
    </location>
</feature>
<feature type="transmembrane region" description="Helical" evidence="1">
    <location>
        <begin position="434"/>
        <end position="454"/>
    </location>
</feature>
<proteinExistence type="inferred from homology"/>
<keyword id="KW-0997">Cell inner membrane</keyword>
<keyword id="KW-1003">Cell membrane</keyword>
<keyword id="KW-0472">Membrane</keyword>
<keyword id="KW-0520">NAD</keyword>
<keyword id="KW-0874">Quinone</keyword>
<keyword id="KW-1278">Translocase</keyword>
<keyword id="KW-0812">Transmembrane</keyword>
<keyword id="KW-1133">Transmembrane helix</keyword>
<keyword id="KW-0813">Transport</keyword>
<keyword id="KW-0830">Ubiquinone</keyword>
<dbReference type="EC" id="7.1.1.-" evidence="1"/>
<dbReference type="EMBL" id="AP010904">
    <property type="protein sequence ID" value="BAH76273.1"/>
    <property type="molecule type" value="Genomic_DNA"/>
</dbReference>
<dbReference type="RefSeq" id="WP_015861439.1">
    <property type="nucleotide sequence ID" value="NC_012796.1"/>
</dbReference>
<dbReference type="SMR" id="C4XGW8"/>
<dbReference type="STRING" id="573370.DMR_27820"/>
<dbReference type="KEGG" id="dma:DMR_27820"/>
<dbReference type="eggNOG" id="COG1007">
    <property type="taxonomic scope" value="Bacteria"/>
</dbReference>
<dbReference type="HOGENOM" id="CLU_007100_1_5_7"/>
<dbReference type="OrthoDB" id="9805769at2"/>
<dbReference type="Proteomes" id="UP000009071">
    <property type="component" value="Chromosome"/>
</dbReference>
<dbReference type="GO" id="GO:0005886">
    <property type="term" value="C:plasma membrane"/>
    <property type="evidence" value="ECO:0007669"/>
    <property type="project" value="UniProtKB-SubCell"/>
</dbReference>
<dbReference type="GO" id="GO:0008137">
    <property type="term" value="F:NADH dehydrogenase (ubiquinone) activity"/>
    <property type="evidence" value="ECO:0007669"/>
    <property type="project" value="InterPro"/>
</dbReference>
<dbReference type="GO" id="GO:0050136">
    <property type="term" value="F:NADH:ubiquinone reductase (non-electrogenic) activity"/>
    <property type="evidence" value="ECO:0007669"/>
    <property type="project" value="UniProtKB-UniRule"/>
</dbReference>
<dbReference type="GO" id="GO:0048038">
    <property type="term" value="F:quinone binding"/>
    <property type="evidence" value="ECO:0007669"/>
    <property type="project" value="UniProtKB-KW"/>
</dbReference>
<dbReference type="GO" id="GO:0042773">
    <property type="term" value="P:ATP synthesis coupled electron transport"/>
    <property type="evidence" value="ECO:0007669"/>
    <property type="project" value="InterPro"/>
</dbReference>
<dbReference type="HAMAP" id="MF_00445">
    <property type="entry name" value="NDH1_NuoN_1"/>
    <property type="match status" value="1"/>
</dbReference>
<dbReference type="InterPro" id="IPR010096">
    <property type="entry name" value="NADH-Q_OxRdtase_suN/2"/>
</dbReference>
<dbReference type="InterPro" id="IPR001750">
    <property type="entry name" value="ND/Mrp_TM"/>
</dbReference>
<dbReference type="NCBIfam" id="TIGR01770">
    <property type="entry name" value="NDH_I_N"/>
    <property type="match status" value="1"/>
</dbReference>
<dbReference type="PANTHER" id="PTHR22773">
    <property type="entry name" value="NADH DEHYDROGENASE"/>
    <property type="match status" value="1"/>
</dbReference>
<dbReference type="Pfam" id="PF00361">
    <property type="entry name" value="Proton_antipo_M"/>
    <property type="match status" value="1"/>
</dbReference>
<sequence>MSIFSLLPELWLLGLVCALFVASISDKKQSVASWLPMAAGLGVLAALFALGERGEFLYAAYKLDGLSQFFKLLIAFGFAVVTGIAAGNKEGKDLTPDYFMLLALSAWGLMLLASCVELITLYLALELSSYSLYALIPLRGQDRRAAEAGIKYILFGAAVTALALFGLSYIIAAKHTTYLSGLAATSWSFADAPMAVIGLTLFLAGFFYKLALFPFHFWCPDVYQGAKNETAAYVATIPKLGAVVVLVRLAAFVAPHLEVTTILAILGAVSMTAGNLAALVQRDLKRLLGFSSVAHAGYVMLGLAAGSAAGMSAAAFYSLAYILMNLAAFYVVCAIAKNDENPSLDDLDGLYKRAPALAMILAVAAFSLVGLPPTAGFAGKLFLLSAAWDQGYHWLVIVAVLNTAISIYYYLSMVRHAYTGESDAPAIVWPRGYLIFGGALAVLVLLLGILPAPLYDLAAQAAGQLHP</sequence>
<name>NUON2_SOLM1</name>
<reference key="1">
    <citation type="journal article" date="2009" name="Genome Res.">
        <title>Whole genome sequence of Desulfovibrio magneticus strain RS-1 revealed common gene clusters in magnetotactic bacteria.</title>
        <authorList>
            <person name="Nakazawa H."/>
            <person name="Arakaki A."/>
            <person name="Narita-Yamada S."/>
            <person name="Yashiro I."/>
            <person name="Jinno K."/>
            <person name="Aoki N."/>
            <person name="Tsuruyama A."/>
            <person name="Okamura Y."/>
            <person name="Tanikawa S."/>
            <person name="Fujita N."/>
            <person name="Takeyama H."/>
            <person name="Matsunaga T."/>
        </authorList>
    </citation>
    <scope>NUCLEOTIDE SEQUENCE [LARGE SCALE GENOMIC DNA]</scope>
    <source>
        <strain>ATCC 700980 / DSM 13731 / RS-1</strain>
    </source>
</reference>
<accession>C4XGW8</accession>
<evidence type="ECO:0000255" key="1">
    <source>
        <dbReference type="HAMAP-Rule" id="MF_00445"/>
    </source>
</evidence>
<organism>
    <name type="scientific">Solidesulfovibrio magneticus (strain ATCC 700980 / DSM 13731 / RS-1)</name>
    <name type="common">Desulfovibrio magneticus</name>
    <dbReference type="NCBI Taxonomy" id="573370"/>
    <lineage>
        <taxon>Bacteria</taxon>
        <taxon>Pseudomonadati</taxon>
        <taxon>Thermodesulfobacteriota</taxon>
        <taxon>Desulfovibrionia</taxon>
        <taxon>Desulfovibrionales</taxon>
        <taxon>Desulfovibrionaceae</taxon>
        <taxon>Solidesulfovibrio</taxon>
    </lineage>
</organism>